<keyword id="KW-0009">Actin-binding</keyword>
<keyword id="KW-0025">Alternative splicing</keyword>
<keyword id="KW-0067">ATP-binding</keyword>
<keyword id="KW-0112">Calmodulin-binding</keyword>
<keyword id="KW-0966">Cell projection</keyword>
<keyword id="KW-0175">Coiled coil</keyword>
<keyword id="KW-0963">Cytoplasm</keyword>
<keyword id="KW-0505">Motor protein</keyword>
<keyword id="KW-0518">Myosin</keyword>
<keyword id="KW-0547">Nucleotide-binding</keyword>
<keyword id="KW-0597">Phosphoprotein</keyword>
<keyword id="KW-1185">Reference proteome</keyword>
<keyword id="KW-0832">Ubl conjugation</keyword>
<feature type="chain" id="PRO_0000123388" description="Myosin heavy chain, non-muscle">
    <location>
        <begin position="1"/>
        <end position="2057"/>
    </location>
</feature>
<feature type="domain" description="Myosin N-terminal SH3-like" evidence="4">
    <location>
        <begin position="78"/>
        <end position="128"/>
    </location>
</feature>
<feature type="domain" description="Myosin motor" evidence="3">
    <location>
        <begin position="132"/>
        <end position="867"/>
    </location>
</feature>
<feature type="domain" description="IQ" evidence="2">
    <location>
        <begin position="870"/>
        <end position="899"/>
    </location>
</feature>
<feature type="region of interest" description="25 kDa/50 kDa junction">
    <location>
        <begin position="250"/>
        <end position="260"/>
    </location>
</feature>
<feature type="region of interest" description="50 kDa/20 kDa junction">
    <location>
        <begin position="722"/>
        <end position="734"/>
    </location>
</feature>
<feature type="region of interest" description="Actin-binding">
    <location>
        <begin position="745"/>
        <end position="767"/>
    </location>
</feature>
<feature type="region of interest" description="Reactive sulfhydryl/actin-binding">
    <location>
        <begin position="782"/>
        <end position="798"/>
    </location>
</feature>
<feature type="region of interest" description="Disordered" evidence="5">
    <location>
        <begin position="1124"/>
        <end position="1144"/>
    </location>
</feature>
<feature type="region of interest" description="Light meromyosin (LMM)">
    <location>
        <begin position="1343"/>
        <end position="2057"/>
    </location>
</feature>
<feature type="region of interest" description="Alpha-helical tailpiece (LMM)">
    <location>
        <begin position="1343"/>
        <end position="2010"/>
    </location>
</feature>
<feature type="region of interest" description="Disordered" evidence="5">
    <location>
        <begin position="1782"/>
        <end position="1802"/>
    </location>
</feature>
<feature type="region of interest" description="Disordered" evidence="5">
    <location>
        <begin position="2008"/>
        <end position="2057"/>
    </location>
</feature>
<feature type="region of interest" description="Globular tailpiece">
    <location>
        <begin position="2011"/>
        <end position="2057"/>
    </location>
</feature>
<feature type="coiled-coil region" evidence="1">
    <location>
        <begin position="926"/>
        <end position="2016"/>
    </location>
</feature>
<feature type="compositionally biased region" description="Basic and acidic residues" evidence="5">
    <location>
        <begin position="1782"/>
        <end position="1792"/>
    </location>
</feature>
<feature type="compositionally biased region" description="Acidic residues" evidence="5">
    <location>
        <begin position="2044"/>
        <end position="2057"/>
    </location>
</feature>
<feature type="binding site">
    <location>
        <begin position="225"/>
        <end position="232"/>
    </location>
    <ligand>
        <name>ATP</name>
        <dbReference type="ChEBI" id="CHEBI:30616"/>
    </ligand>
</feature>
<feature type="modified residue" description="Phosphoserine" evidence="6">
    <location>
        <position position="2021"/>
    </location>
</feature>
<feature type="modified residue" description="Phosphoserine" evidence="6">
    <location>
        <position position="2022"/>
    </location>
</feature>
<feature type="splice variant" id="VSP_003342" description="In isoform 2 and isoform 4." evidence="14">
    <location>
        <begin position="1"/>
        <end position="45"/>
    </location>
</feature>
<feature type="splice variant" id="VSP_011159" description="In isoform 1 and isoform 2." evidence="14">
    <location>
        <begin position="264"/>
        <end position="303"/>
    </location>
</feature>
<feature type="mutagenesis site" description="Large percentage of detached scolopidia in Johnston's organs but no effect on interaction with ck." evidence="10">
    <original>R</original>
    <variation>C</variation>
    <location>
        <position position="1256"/>
    </location>
</feature>
<feature type="mutagenesis site" description="Small percentage of detached scolopidia in Johnston's organs but no effect on interaction with ck." evidence="10">
    <original>D</original>
    <variation>N</variation>
    <location>
        <position position="1515"/>
    </location>
</feature>
<feature type="mutagenesis site" description="Increased interaction with ck and large percentage of detached scolopidia in Johnston's organs." evidence="10">
    <original>D</original>
    <variation>K</variation>
    <location>
        <position position="1932"/>
    </location>
</feature>
<feature type="mutagenesis site" description="Small percentage of detached scolopidia in Johnston's organs but no effect on interaction with ck." evidence="10">
    <original>R</original>
    <variation>X</variation>
    <location>
        <position position="2024"/>
    </location>
</feature>
<feature type="sequence conflict" description="In Ref. 3; AAF47311/AAM70805." evidence="15" ref="3">
    <original>PIRPRRPSGHRSV</original>
    <variation>DPATQAEWTQKR</variation>
    <location>
        <begin position="69"/>
        <end position="81"/>
    </location>
</feature>
<feature type="sequence conflict" description="In Ref. 3; AAF47311/AAM70805." evidence="15" ref="3">
    <original>T</original>
    <variation>S</variation>
    <location>
        <position position="1121"/>
    </location>
</feature>
<feature type="sequence conflict" description="In Ref. 3; AAF47311/AAM70805." evidence="15" ref="3">
    <original>DG</original>
    <variation>ER</variation>
    <location>
        <begin position="1763"/>
        <end position="1764"/>
    </location>
</feature>
<feature type="sequence conflict" description="In Ref. 1; AAA28713." evidence="15" ref="1">
    <original>SRKA</original>
    <variation>AAAR</variation>
    <location>
        <begin position="1843"/>
        <end position="1846"/>
    </location>
</feature>
<feature type="sequence conflict" description="In Ref. 1; AAA28713." evidence="15" ref="1">
    <original>NL</original>
    <variation>KV</variation>
    <location>
        <begin position="1909"/>
        <end position="1910"/>
    </location>
</feature>
<feature type="sequence conflict" description="In Ref. 3; AAF47311/AAM70805." evidence="15" ref="3">
    <original>S</original>
    <variation>G</variation>
    <location>
        <position position="2040"/>
    </location>
</feature>
<organism>
    <name type="scientific">Drosophila melanogaster</name>
    <name type="common">Fruit fly</name>
    <dbReference type="NCBI Taxonomy" id="7227"/>
    <lineage>
        <taxon>Eukaryota</taxon>
        <taxon>Metazoa</taxon>
        <taxon>Ecdysozoa</taxon>
        <taxon>Arthropoda</taxon>
        <taxon>Hexapoda</taxon>
        <taxon>Insecta</taxon>
        <taxon>Pterygota</taxon>
        <taxon>Neoptera</taxon>
        <taxon>Endopterygota</taxon>
        <taxon>Diptera</taxon>
        <taxon>Brachycera</taxon>
        <taxon>Muscomorpha</taxon>
        <taxon>Ephydroidea</taxon>
        <taxon>Drosophilidae</taxon>
        <taxon>Drosophila</taxon>
        <taxon>Sophophora</taxon>
    </lineage>
</organism>
<gene>
    <name type="primary">zip</name>
    <name type="ORF">CG15792</name>
</gene>
<name>MYSN_DROME</name>
<proteinExistence type="evidence at protein level"/>
<dbReference type="EMBL" id="M35012">
    <property type="protein sequence ID" value="AAA28713.1"/>
    <property type="molecule type" value="mRNA"/>
</dbReference>
<dbReference type="EMBL" id="U35816">
    <property type="protein sequence ID" value="AAB09048.1"/>
    <property type="molecule type" value="Genomic_DNA"/>
</dbReference>
<dbReference type="EMBL" id="U35816">
    <property type="protein sequence ID" value="AAB09049.1"/>
    <property type="molecule type" value="Genomic_DNA"/>
</dbReference>
<dbReference type="EMBL" id="U35816">
    <property type="protein sequence ID" value="AAB09050.1"/>
    <property type="molecule type" value="Genomic_DNA"/>
</dbReference>
<dbReference type="EMBL" id="U35816">
    <property type="protein sequence ID" value="AAB09051.1"/>
    <property type="molecule type" value="Genomic_DNA"/>
</dbReference>
<dbReference type="EMBL" id="AE013599">
    <property type="protein sequence ID" value="AAF47311.1"/>
    <property type="molecule type" value="Genomic_DNA"/>
</dbReference>
<dbReference type="EMBL" id="AE013599">
    <property type="protein sequence ID" value="AAM70805.1"/>
    <property type="molecule type" value="Genomic_DNA"/>
</dbReference>
<dbReference type="PIR" id="A36014">
    <property type="entry name" value="A36014"/>
</dbReference>
<dbReference type="PIR" id="S61477">
    <property type="entry name" value="S61477"/>
</dbReference>
<dbReference type="RefSeq" id="NP_523860.2">
    <property type="nucleotide sequence ID" value="NM_079136.4"/>
</dbReference>
<dbReference type="RefSeq" id="NP_726506.1">
    <property type="nucleotide sequence ID" value="NM_166704.4"/>
</dbReference>
<dbReference type="SMR" id="Q99323"/>
<dbReference type="BioGRID" id="63569">
    <property type="interactions" value="91"/>
</dbReference>
<dbReference type="FunCoup" id="Q99323">
    <property type="interactions" value="455"/>
</dbReference>
<dbReference type="IntAct" id="Q99323">
    <property type="interactions" value="13"/>
</dbReference>
<dbReference type="STRING" id="7227.FBpp0072306"/>
<dbReference type="BindingDB" id="Q99323"/>
<dbReference type="ChEMBL" id="CHEMBL4295929"/>
<dbReference type="iPTMnet" id="Q99323"/>
<dbReference type="PaxDb" id="7227-FBpp0072306"/>
<dbReference type="PeptideAtlas" id="Q99323"/>
<dbReference type="GeneID" id="38001"/>
<dbReference type="KEGG" id="dme:Dmel_CG15792"/>
<dbReference type="AGR" id="FB:FBgn0287873"/>
<dbReference type="CTD" id="38001"/>
<dbReference type="FlyBase" id="FBgn0287873">
    <property type="gene designation" value="zip"/>
</dbReference>
<dbReference type="VEuPathDB" id="VectorBase:FBgn0287873"/>
<dbReference type="eggNOG" id="KOG0161">
    <property type="taxonomic scope" value="Eukaryota"/>
</dbReference>
<dbReference type="InParanoid" id="Q99323"/>
<dbReference type="OrthoDB" id="10254995at2759"/>
<dbReference type="PhylomeDB" id="Q99323"/>
<dbReference type="Reactome" id="R-DME-350480">
    <property type="pathway name" value="Activation of non-muscle Myosin II"/>
</dbReference>
<dbReference type="Reactome" id="R-DME-445355">
    <property type="pathway name" value="Smooth Muscle Contraction"/>
</dbReference>
<dbReference type="Reactome" id="R-DME-5627123">
    <property type="pathway name" value="RHO GTPases activate PAKs"/>
</dbReference>
<dbReference type="SignaLink" id="Q99323"/>
<dbReference type="BioGRID-ORCS" id="38001">
    <property type="hits" value="0 hits in 3 CRISPR screens"/>
</dbReference>
<dbReference type="GenomeRNAi" id="38001"/>
<dbReference type="PRO" id="PR:Q99323"/>
<dbReference type="Proteomes" id="UP000000803">
    <property type="component" value="Chromosome 2R"/>
</dbReference>
<dbReference type="ExpressionAtlas" id="Q99323">
    <property type="expression patterns" value="baseline and differential"/>
</dbReference>
<dbReference type="GO" id="GO:0005826">
    <property type="term" value="C:actomyosin contractile ring"/>
    <property type="evidence" value="ECO:0000314"/>
    <property type="project" value="FlyBase"/>
</dbReference>
<dbReference type="GO" id="GO:0106037">
    <property type="term" value="C:apicomedial cortex"/>
    <property type="evidence" value="ECO:0000314"/>
    <property type="project" value="FlyBase"/>
</dbReference>
<dbReference type="GO" id="GO:0045180">
    <property type="term" value="C:basal cortex"/>
    <property type="evidence" value="ECO:0000314"/>
    <property type="project" value="FlyBase"/>
</dbReference>
<dbReference type="GO" id="GO:0005938">
    <property type="term" value="C:cell cortex"/>
    <property type="evidence" value="ECO:0000314"/>
    <property type="project" value="FlyBase"/>
</dbReference>
<dbReference type="GO" id="GO:0031252">
    <property type="term" value="C:cell leading edge"/>
    <property type="evidence" value="ECO:0000314"/>
    <property type="project" value="UniProtKB"/>
</dbReference>
<dbReference type="GO" id="GO:0044291">
    <property type="term" value="C:cell-cell contact zone"/>
    <property type="evidence" value="ECO:0000314"/>
    <property type="project" value="FlyBase"/>
</dbReference>
<dbReference type="GO" id="GO:0005929">
    <property type="term" value="C:cilium"/>
    <property type="evidence" value="ECO:0007669"/>
    <property type="project" value="UniProtKB-SubCell"/>
</dbReference>
<dbReference type="GO" id="GO:0032154">
    <property type="term" value="C:cleavage furrow"/>
    <property type="evidence" value="ECO:0000314"/>
    <property type="project" value="FlyBase"/>
</dbReference>
<dbReference type="GO" id="GO:0005737">
    <property type="term" value="C:cytoplasm"/>
    <property type="evidence" value="ECO:0000318"/>
    <property type="project" value="GO_Central"/>
</dbReference>
<dbReference type="GO" id="GO:0005829">
    <property type="term" value="C:cytosol"/>
    <property type="evidence" value="ECO:0007005"/>
    <property type="project" value="FlyBase"/>
</dbReference>
<dbReference type="GO" id="GO:0032982">
    <property type="term" value="C:myosin filament"/>
    <property type="evidence" value="ECO:0000318"/>
    <property type="project" value="GO_Central"/>
</dbReference>
<dbReference type="GO" id="GO:0016460">
    <property type="term" value="C:myosin II complex"/>
    <property type="evidence" value="ECO:0000314"/>
    <property type="project" value="FlyBase"/>
</dbReference>
<dbReference type="GO" id="GO:0030018">
    <property type="term" value="C:Z disc"/>
    <property type="evidence" value="ECO:0000314"/>
    <property type="project" value="FlyBase"/>
</dbReference>
<dbReference type="GO" id="GO:0051015">
    <property type="term" value="F:actin filament binding"/>
    <property type="evidence" value="ECO:0000318"/>
    <property type="project" value="GO_Central"/>
</dbReference>
<dbReference type="GO" id="GO:0005524">
    <property type="term" value="F:ATP binding"/>
    <property type="evidence" value="ECO:0007669"/>
    <property type="project" value="UniProtKB-KW"/>
</dbReference>
<dbReference type="GO" id="GO:0005516">
    <property type="term" value="F:calmodulin binding"/>
    <property type="evidence" value="ECO:0007669"/>
    <property type="project" value="UniProtKB-KW"/>
</dbReference>
<dbReference type="GO" id="GO:0042802">
    <property type="term" value="F:identical protein binding"/>
    <property type="evidence" value="ECO:0000353"/>
    <property type="project" value="IntAct"/>
</dbReference>
<dbReference type="GO" id="GO:0000146">
    <property type="term" value="F:microfilament motor activity"/>
    <property type="evidence" value="ECO:0000250"/>
    <property type="project" value="FlyBase"/>
</dbReference>
<dbReference type="GO" id="GO:0032027">
    <property type="term" value="F:myosin light chain binding"/>
    <property type="evidence" value="ECO:0000353"/>
    <property type="project" value="FlyBase"/>
</dbReference>
<dbReference type="GO" id="GO:0007496">
    <property type="term" value="P:anterior midgut development"/>
    <property type="evidence" value="ECO:0000315"/>
    <property type="project" value="FlyBase"/>
</dbReference>
<dbReference type="GO" id="GO:0007298">
    <property type="term" value="P:border follicle cell migration"/>
    <property type="evidence" value="ECO:0000315"/>
    <property type="project" value="FlyBase"/>
</dbReference>
<dbReference type="GO" id="GO:0071260">
    <property type="term" value="P:cellular response to mechanical stimulus"/>
    <property type="evidence" value="ECO:0000314"/>
    <property type="project" value="FlyBase"/>
</dbReference>
<dbReference type="GO" id="GO:0060289">
    <property type="term" value="P:compartment boundary maintenance"/>
    <property type="evidence" value="ECO:0000315"/>
    <property type="project" value="FlyBase"/>
</dbReference>
<dbReference type="GO" id="GO:0035017">
    <property type="term" value="P:cuticle pattern formation"/>
    <property type="evidence" value="ECO:0000315"/>
    <property type="project" value="FlyBase"/>
</dbReference>
<dbReference type="GO" id="GO:0061640">
    <property type="term" value="P:cytoskeleton-dependent cytokinesis"/>
    <property type="evidence" value="ECO:0000315"/>
    <property type="project" value="FlyBase"/>
</dbReference>
<dbReference type="GO" id="GO:0007391">
    <property type="term" value="P:dorsal closure"/>
    <property type="evidence" value="ECO:0000315"/>
    <property type="project" value="FlyBase"/>
</dbReference>
<dbReference type="GO" id="GO:0046664">
    <property type="term" value="P:dorsal closure, amnioserosa morphology change"/>
    <property type="evidence" value="ECO:0000315"/>
    <property type="project" value="FlyBase"/>
</dbReference>
<dbReference type="GO" id="GO:0046663">
    <property type="term" value="P:dorsal closure, leading edge cell differentiation"/>
    <property type="evidence" value="ECO:0000315"/>
    <property type="project" value="FlyBase"/>
</dbReference>
<dbReference type="GO" id="GO:0007395">
    <property type="term" value="P:dorsal closure, spreading of leading edge cells"/>
    <property type="evidence" value="ECO:0000315"/>
    <property type="project" value="FlyBase"/>
</dbReference>
<dbReference type="GO" id="GO:0007455">
    <property type="term" value="P:eye-antennal disc morphogenesis"/>
    <property type="evidence" value="ECO:0000315"/>
    <property type="project" value="FlyBase"/>
</dbReference>
<dbReference type="GO" id="GO:0008258">
    <property type="term" value="P:head involution"/>
    <property type="evidence" value="ECO:0000315"/>
    <property type="project" value="FlyBase"/>
</dbReference>
<dbReference type="GO" id="GO:0035317">
    <property type="term" value="P:imaginal disc-derived wing hair organization"/>
    <property type="evidence" value="ECO:0000316"/>
    <property type="project" value="FlyBase"/>
</dbReference>
<dbReference type="GO" id="GO:0070986">
    <property type="term" value="P:left/right axis specification"/>
    <property type="evidence" value="ECO:0000315"/>
    <property type="project" value="FlyBase"/>
</dbReference>
<dbReference type="GO" id="GO:0032507">
    <property type="term" value="P:maintenance of protein location in cell"/>
    <property type="evidence" value="ECO:0000315"/>
    <property type="project" value="FlyBase"/>
</dbReference>
<dbReference type="GO" id="GO:0007443">
    <property type="term" value="P:Malpighian tubule morphogenesis"/>
    <property type="evidence" value="ECO:0000315"/>
    <property type="project" value="FlyBase"/>
</dbReference>
<dbReference type="GO" id="GO:0000281">
    <property type="term" value="P:mitotic cytokinesis"/>
    <property type="evidence" value="ECO:0000315"/>
    <property type="project" value="FlyBase"/>
</dbReference>
<dbReference type="GO" id="GO:0060571">
    <property type="term" value="P:morphogenesis of an epithelial fold"/>
    <property type="evidence" value="ECO:0000315"/>
    <property type="project" value="FlyBase"/>
</dbReference>
<dbReference type="GO" id="GO:0006936">
    <property type="term" value="P:muscle contraction"/>
    <property type="evidence" value="ECO:0000315"/>
    <property type="project" value="FlyBase"/>
</dbReference>
<dbReference type="GO" id="GO:0030239">
    <property type="term" value="P:myofibril assembly"/>
    <property type="evidence" value="ECO:0000315"/>
    <property type="project" value="FlyBase"/>
</dbReference>
<dbReference type="GO" id="GO:0031036">
    <property type="term" value="P:myosin II filament assembly"/>
    <property type="evidence" value="ECO:0000314"/>
    <property type="project" value="FlyBase"/>
</dbReference>
<dbReference type="GO" id="GO:1903688">
    <property type="term" value="P:positive regulation of border follicle cell migration"/>
    <property type="evidence" value="ECO:0000315"/>
    <property type="project" value="FlyBase"/>
</dbReference>
<dbReference type="GO" id="GO:0090175">
    <property type="term" value="P:regulation of establishment of planar polarity"/>
    <property type="evidence" value="ECO:0000315"/>
    <property type="project" value="FlyBase"/>
</dbReference>
<dbReference type="GO" id="GO:1901739">
    <property type="term" value="P:regulation of myoblast fusion"/>
    <property type="evidence" value="ECO:0000316"/>
    <property type="project" value="FlyBase"/>
</dbReference>
<dbReference type="GO" id="GO:0035159">
    <property type="term" value="P:regulation of tube length, open tracheal system"/>
    <property type="evidence" value="ECO:0000315"/>
    <property type="project" value="FlyBase"/>
</dbReference>
<dbReference type="GO" id="GO:0007435">
    <property type="term" value="P:salivary gland morphogenesis"/>
    <property type="evidence" value="ECO:0000315"/>
    <property type="project" value="FlyBase"/>
</dbReference>
<dbReference type="GO" id="GO:0045214">
    <property type="term" value="P:sarcomere organization"/>
    <property type="evidence" value="ECO:0000315"/>
    <property type="project" value="FlyBase"/>
</dbReference>
<dbReference type="GO" id="GO:0007605">
    <property type="term" value="P:sensory perception of sound"/>
    <property type="evidence" value="ECO:0000315"/>
    <property type="project" value="FlyBase"/>
</dbReference>
<dbReference type="GO" id="GO:0035277">
    <property type="term" value="P:spiracle morphogenesis, open tracheal system"/>
    <property type="evidence" value="ECO:0000314"/>
    <property type="project" value="FlyBase"/>
</dbReference>
<dbReference type="GO" id="GO:0042060">
    <property type="term" value="P:wound healing"/>
    <property type="evidence" value="ECO:0000315"/>
    <property type="project" value="FlyBase"/>
</dbReference>
<dbReference type="CDD" id="cd14911">
    <property type="entry name" value="MYSc_Myh2_insects_mollusks"/>
    <property type="match status" value="1"/>
</dbReference>
<dbReference type="FunFam" id="1.10.10.820:FF:000001">
    <property type="entry name" value="Myosin heavy chain"/>
    <property type="match status" value="1"/>
</dbReference>
<dbReference type="FunFam" id="2.30.30.360:FF:000001">
    <property type="entry name" value="Myosin heavy chain"/>
    <property type="match status" value="1"/>
</dbReference>
<dbReference type="FunFam" id="3.30.70.1590:FF:000001">
    <property type="entry name" value="Myosin heavy chain"/>
    <property type="match status" value="1"/>
</dbReference>
<dbReference type="FunFam" id="1.20.5.4820:FF:000002">
    <property type="entry name" value="Myosin heavy chain 10"/>
    <property type="match status" value="1"/>
</dbReference>
<dbReference type="FunFam" id="1.20.58.530:FF:000003">
    <property type="entry name" value="Myosin heavy chain 10"/>
    <property type="match status" value="1"/>
</dbReference>
<dbReference type="FunFam" id="1.20.120.720:FF:000001">
    <property type="entry name" value="Myosin heavy chain, muscle"/>
    <property type="match status" value="1"/>
</dbReference>
<dbReference type="FunFam" id="1.20.5.340:FF:000007">
    <property type="entry name" value="Myosin heavy chain, non-muscle"/>
    <property type="match status" value="1"/>
</dbReference>
<dbReference type="FunFam" id="1.20.5.340:FF:000009">
    <property type="entry name" value="myosin-11 isoform X2"/>
    <property type="match status" value="1"/>
</dbReference>
<dbReference type="FunFam" id="3.40.850.10:FF:000101">
    <property type="entry name" value="Slow myosin heavy chain 2"/>
    <property type="match status" value="1"/>
</dbReference>
<dbReference type="Gene3D" id="1.10.10.820">
    <property type="match status" value="1"/>
</dbReference>
<dbReference type="Gene3D" id="1.20.5.340">
    <property type="match status" value="4"/>
</dbReference>
<dbReference type="Gene3D" id="1.20.58.530">
    <property type="match status" value="1"/>
</dbReference>
<dbReference type="Gene3D" id="3.30.70.1590">
    <property type="match status" value="1"/>
</dbReference>
<dbReference type="Gene3D" id="6.10.250.2420">
    <property type="match status" value="1"/>
</dbReference>
<dbReference type="Gene3D" id="3.40.850.10">
    <property type="entry name" value="Kinesin motor domain"/>
    <property type="match status" value="1"/>
</dbReference>
<dbReference type="Gene3D" id="2.30.30.360">
    <property type="entry name" value="Myosin S1 fragment, N-terminal"/>
    <property type="match status" value="1"/>
</dbReference>
<dbReference type="Gene3D" id="1.20.120.720">
    <property type="entry name" value="Myosin VI head, motor domain, U50 subdomain"/>
    <property type="match status" value="1"/>
</dbReference>
<dbReference type="Gene3D" id="4.10.270.10">
    <property type="entry name" value="Myosin, subunit A"/>
    <property type="match status" value="1"/>
</dbReference>
<dbReference type="InterPro" id="IPR000048">
    <property type="entry name" value="IQ_motif_EF-hand-BS"/>
</dbReference>
<dbReference type="InterPro" id="IPR036961">
    <property type="entry name" value="Kinesin_motor_dom_sf"/>
</dbReference>
<dbReference type="InterPro" id="IPR001609">
    <property type="entry name" value="Myosin_head_motor_dom-like"/>
</dbReference>
<dbReference type="InterPro" id="IPR004009">
    <property type="entry name" value="Myosin_N"/>
</dbReference>
<dbReference type="InterPro" id="IPR008989">
    <property type="entry name" value="Myosin_S1_N"/>
</dbReference>
<dbReference type="InterPro" id="IPR002928">
    <property type="entry name" value="Myosin_tail"/>
</dbReference>
<dbReference type="InterPro" id="IPR027417">
    <property type="entry name" value="P-loop_NTPase"/>
</dbReference>
<dbReference type="PANTHER" id="PTHR13140">
    <property type="entry name" value="MYOSIN"/>
    <property type="match status" value="1"/>
</dbReference>
<dbReference type="PANTHER" id="PTHR13140:SF857">
    <property type="entry name" value="MYOSIN-11"/>
    <property type="match status" value="1"/>
</dbReference>
<dbReference type="Pfam" id="PF00612">
    <property type="entry name" value="IQ"/>
    <property type="match status" value="1"/>
</dbReference>
<dbReference type="Pfam" id="PF00063">
    <property type="entry name" value="Myosin_head"/>
    <property type="match status" value="1"/>
</dbReference>
<dbReference type="Pfam" id="PF02736">
    <property type="entry name" value="Myosin_N"/>
    <property type="match status" value="1"/>
</dbReference>
<dbReference type="Pfam" id="PF01576">
    <property type="entry name" value="Myosin_tail_1"/>
    <property type="match status" value="1"/>
</dbReference>
<dbReference type="PRINTS" id="PR00193">
    <property type="entry name" value="MYOSINHEAVY"/>
</dbReference>
<dbReference type="SMART" id="SM00015">
    <property type="entry name" value="IQ"/>
    <property type="match status" value="1"/>
</dbReference>
<dbReference type="SMART" id="SM00242">
    <property type="entry name" value="MYSc"/>
    <property type="match status" value="1"/>
</dbReference>
<dbReference type="SUPFAM" id="SSF90257">
    <property type="entry name" value="Myosin rod fragments"/>
    <property type="match status" value="4"/>
</dbReference>
<dbReference type="SUPFAM" id="SSF52540">
    <property type="entry name" value="P-loop containing nucleoside triphosphate hydrolases"/>
    <property type="match status" value="1"/>
</dbReference>
<dbReference type="PROSITE" id="PS50096">
    <property type="entry name" value="IQ"/>
    <property type="match status" value="1"/>
</dbReference>
<dbReference type="PROSITE" id="PS51456">
    <property type="entry name" value="MYOSIN_MOTOR"/>
    <property type="match status" value="1"/>
</dbReference>
<dbReference type="PROSITE" id="PS51844">
    <property type="entry name" value="SH3_LIKE"/>
    <property type="match status" value="1"/>
</dbReference>
<sequence length="2057" mass="236644">MKSAWLALKSKSALHPKSEYPVSNIHYPKAANYRQTRNYLEIAAKMSEEVDRNDPELKYLSVERNQFNPIRPRRPSGHRSVLVWVPHENQGFVAASIKREHGDEVEVELAETGKRVMILRDDIQKMNPPKFDKVEDMAELTCLNEASVLHNIKDRYYSGLIYTYSGLFCVVVNPYKKLPIYTEKIMERYKGIKRHEVPPHVFAITDSAYRNMLGDREDQSILCTGESGAGKTENTKKVIQFLAYVAASKPKGSGAVPHPAVLINFSVNTNKYIKVKIMAQNQNQTIEVVNGLKMVEVNSNCQEGELEQQLLQANPILEAFGNAKTVKNDNSSRFGKFIRINFDASGFISGANIETYLLEKSRAIRQAKDERTFHIFYQLLAGATPEQREKFILDDVKSYAFLSNGSLPVPGVDDYAEFQATVKSMNIMGMTSEDFNSIFRIVSAVLLFGSMKFRQERNNDQATLPDNTVAQKIAHLLGLSVTDMTRAFLTPRIKVGRDFVTKAQTKEQVEFAVEAIAKACYERMFKWLVNRINRSLDRTKRQGASFIGILDMAGFEIFELNSFEQLCINYTNEKLQQLFNHTMFILEQEEYQREGIEWKFIDFGLDLQPTIDLIDKPGGIMALLDEECWFPKATDKTFVDKLVSAHSMHPKFMKTDFRGVADFAIVHYAGRVDYSAAKWLMKNMDPLNENIVSLLQGSQDPFVVNIWKDAEIVGMAQQALTDTQFGARTRKGMFRTVSHLYKEQLAKLMDTLRNTNPNFVRCIIPNHEKRAGKIDAPLVLDQLRCNGVLEGIRICRQGFPNRIPFQEFRQRYELLTPNVIPKGFMDGKKACEKMIQALELDSNLYRVGQSKIFFRAGVLAHLEEERDFKISDLIVNFQAFCRGFLARRNYQKRLQQLNAIRIIQRNCAAYLKLRNWQWWRLYTKVKPLLEVTKQEEKLVQKEDELKQVREKLDTLAKNTQEYERKYQQALVEKTTLAEQLQAEIELCAEAEESRSRLMARKQELEDMMQELETRIEEEEERVLALGGEKKKLELNIQDLEEQLEEEEAARQKLQLEKVQLDAKIKKYEEDLALTDDQNQKLLKEKKLLEERANDLSQTLAEEEEKAKHLAKLKAKHEATITELEERLHKDQQQRQESDRSKRKIETEVADLKEQLNERRVQVDEMQAQLAKREEELTQTLLRIDEESATKATAQKAQRELESQLAEIQEDLEAEKAARAKAEKVRRDLSEELEALKNELLDSLDTTAAQQELRSKREQELATLKKSLEEETVNHEGVLADMRHKHSQELNSINDQLENLRKAKTVLEKAKGTLEAENADLATELRSVNSSRQENDRRRKQAESQIAELQVKLAEIERARSELQEKCTKLQQEAENITNQLEEAELKASAAVKSASNMESQLTEAQQLLEEETRQKLGLSSKLRQIESEKEALQEQLEEDDEAKRNYERKLAEVTTQMQEIKKKAEEDADLAKELEEGKKRLNKDIEALERQVKELIAQNDRLDKSKKKIQSELEDATIELEAQRTKVLELEKKQKNFDKILAEEKAISEQIAQERDTAEREAREKETKVLSVSRELDEAFDKIEDLENKRKTLQNELDDLANTQGTADKNVHELEKAKRALESQLAELKAQNEELEDDLQLTEDAKLRLEVNMQALRSQFERDLLAKEEGAEEKRRGLVKQLRDLETELDEERKQRTAAVASKKKLEGDLKEIETTMEMHNKVKEDALKHAKKLQAQVKDALRDAEEAKAAKEELQALSKEADGKVKALEAEVLQLTEDLASSERARRAAETERDELAEEIANNANKGSLMIDEKRRLEARIATLEEELEEEQSNSEVLLDRSRKAQLQIEQLTTELANEKSNSQKNENGRALLERQNKELKAKLAEIETAQRTKVKATIATLEAKIANLEEQLENEGKERLLQQKANRKMDKKIKELTMNIEDERRHVDQHKEQMDKLNSRIKLLKRNLDETEEELQKEKTQKRKYQRECEDMIESQEAMNREINSLKTKLRRTGGIGLSSSRLTGTPSSKRAGGGGGSDDSSVQDESLDGEDSAN</sequence>
<evidence type="ECO:0000255" key="1"/>
<evidence type="ECO:0000255" key="2">
    <source>
        <dbReference type="PROSITE-ProRule" id="PRU00116"/>
    </source>
</evidence>
<evidence type="ECO:0000255" key="3">
    <source>
        <dbReference type="PROSITE-ProRule" id="PRU00782"/>
    </source>
</evidence>
<evidence type="ECO:0000255" key="4">
    <source>
        <dbReference type="PROSITE-ProRule" id="PRU01190"/>
    </source>
</evidence>
<evidence type="ECO:0000256" key="5">
    <source>
        <dbReference type="SAM" id="MobiDB-lite"/>
    </source>
</evidence>
<evidence type="ECO:0000269" key="6">
    <source>
    </source>
</evidence>
<evidence type="ECO:0000269" key="7">
    <source>
    </source>
</evidence>
<evidence type="ECO:0000269" key="8">
    <source>
    </source>
</evidence>
<evidence type="ECO:0000269" key="9">
    <source>
    </source>
</evidence>
<evidence type="ECO:0000269" key="10">
    <source>
    </source>
</evidence>
<evidence type="ECO:0000269" key="11">
    <source>
    </source>
</evidence>
<evidence type="ECO:0000269" key="12">
    <source>
    </source>
</evidence>
<evidence type="ECO:0000269" key="13">
    <source>
    </source>
</evidence>
<evidence type="ECO:0000303" key="14">
    <source>
    </source>
</evidence>
<evidence type="ECO:0000305" key="15"/>
<protein>
    <recommendedName>
        <fullName>Myosin heavy chain, non-muscle</fullName>
    </recommendedName>
    <alternativeName>
        <fullName>Myosin II</fullName>
    </alternativeName>
    <alternativeName>
        <fullName>Non-muscle MHC</fullName>
    </alternativeName>
    <alternativeName>
        <fullName>Zipper protein</fullName>
    </alternativeName>
</protein>
<accession>Q99323</accession>
<accession>Q24138</accession>
<accession>Q7JPC1</accession>
<accession>Q7JPC2</accession>
<accession>Q8MMC2</accession>
<accession>Q94987</accession>
<accession>Q94992</accession>
<accession>Q9W0W8</accession>
<reference key="1">
    <citation type="journal article" date="1990" name="Proc. Natl. Acad. Sci. U.S.A.">
        <title>Complete sequence of the Drosophila nonmuscle myosin heavy-chain transcript: conserved sequences in the myosin tail and differential splicing in the 5' untranslated sequence.</title>
        <authorList>
            <person name="Ketchum A.S."/>
            <person name="Stewart C.T."/>
            <person name="Stewart M."/>
            <person name="Kiehart D.P."/>
        </authorList>
    </citation>
    <scope>NUCLEOTIDE SEQUENCE [MRNA] (ISOFORMS 1 AND 2)</scope>
    <source>
        <tissue>Embryo</tissue>
    </source>
</reference>
<reference key="2">
    <citation type="journal article" date="1996" name="J. Mol. Biol.">
        <title>Molecular organization and alternative splicing in zipper, the gene that encodes the Drosophila non-muscle myosin II heavy chain.</title>
        <authorList>
            <person name="Mansfield S.G."/>
            <person name="Al-Shirawi D.Y."/>
            <person name="Ketchum A.S."/>
            <person name="Newbern E.C."/>
            <person name="Kiehart D.P."/>
        </authorList>
    </citation>
    <scope>NUCLEOTIDE SEQUENCE [GENOMIC DNA] (ISOFORMS 1; 2; 3 AND 4)</scope>
    <scope>DEVELOPMENTAL STAGE</scope>
</reference>
<reference key="3">
    <citation type="journal article" date="2000" name="Science">
        <title>The genome sequence of Drosophila melanogaster.</title>
        <authorList>
            <person name="Adams M.D."/>
            <person name="Celniker S.E."/>
            <person name="Holt R.A."/>
            <person name="Evans C.A."/>
            <person name="Gocayne J.D."/>
            <person name="Amanatides P.G."/>
            <person name="Scherer S.E."/>
            <person name="Li P.W."/>
            <person name="Hoskins R.A."/>
            <person name="Galle R.F."/>
            <person name="George R.A."/>
            <person name="Lewis S.E."/>
            <person name="Richards S."/>
            <person name="Ashburner M."/>
            <person name="Henderson S.N."/>
            <person name="Sutton G.G."/>
            <person name="Wortman J.R."/>
            <person name="Yandell M.D."/>
            <person name="Zhang Q."/>
            <person name="Chen L.X."/>
            <person name="Brandon R.C."/>
            <person name="Rogers Y.-H.C."/>
            <person name="Blazej R.G."/>
            <person name="Champe M."/>
            <person name="Pfeiffer B.D."/>
            <person name="Wan K.H."/>
            <person name="Doyle C."/>
            <person name="Baxter E.G."/>
            <person name="Helt G."/>
            <person name="Nelson C.R."/>
            <person name="Miklos G.L.G."/>
            <person name="Abril J.F."/>
            <person name="Agbayani A."/>
            <person name="An H.-J."/>
            <person name="Andrews-Pfannkoch C."/>
            <person name="Baldwin D."/>
            <person name="Ballew R.M."/>
            <person name="Basu A."/>
            <person name="Baxendale J."/>
            <person name="Bayraktaroglu L."/>
            <person name="Beasley E.M."/>
            <person name="Beeson K.Y."/>
            <person name="Benos P.V."/>
            <person name="Berman B.P."/>
            <person name="Bhandari D."/>
            <person name="Bolshakov S."/>
            <person name="Borkova D."/>
            <person name="Botchan M.R."/>
            <person name="Bouck J."/>
            <person name="Brokstein P."/>
            <person name="Brottier P."/>
            <person name="Burtis K.C."/>
            <person name="Busam D.A."/>
            <person name="Butler H."/>
            <person name="Cadieu E."/>
            <person name="Center A."/>
            <person name="Chandra I."/>
            <person name="Cherry J.M."/>
            <person name="Cawley S."/>
            <person name="Dahlke C."/>
            <person name="Davenport L.B."/>
            <person name="Davies P."/>
            <person name="de Pablos B."/>
            <person name="Delcher A."/>
            <person name="Deng Z."/>
            <person name="Mays A.D."/>
            <person name="Dew I."/>
            <person name="Dietz S.M."/>
            <person name="Dodson K."/>
            <person name="Doup L.E."/>
            <person name="Downes M."/>
            <person name="Dugan-Rocha S."/>
            <person name="Dunkov B.C."/>
            <person name="Dunn P."/>
            <person name="Durbin K.J."/>
            <person name="Evangelista C.C."/>
            <person name="Ferraz C."/>
            <person name="Ferriera S."/>
            <person name="Fleischmann W."/>
            <person name="Fosler C."/>
            <person name="Gabrielian A.E."/>
            <person name="Garg N.S."/>
            <person name="Gelbart W.M."/>
            <person name="Glasser K."/>
            <person name="Glodek A."/>
            <person name="Gong F."/>
            <person name="Gorrell J.H."/>
            <person name="Gu Z."/>
            <person name="Guan P."/>
            <person name="Harris M."/>
            <person name="Harris N.L."/>
            <person name="Harvey D.A."/>
            <person name="Heiman T.J."/>
            <person name="Hernandez J.R."/>
            <person name="Houck J."/>
            <person name="Hostin D."/>
            <person name="Houston K.A."/>
            <person name="Howland T.J."/>
            <person name="Wei M.-H."/>
            <person name="Ibegwam C."/>
            <person name="Jalali M."/>
            <person name="Kalush F."/>
            <person name="Karpen G.H."/>
            <person name="Ke Z."/>
            <person name="Kennison J.A."/>
            <person name="Ketchum K.A."/>
            <person name="Kimmel B.E."/>
            <person name="Kodira C.D."/>
            <person name="Kraft C.L."/>
            <person name="Kravitz S."/>
            <person name="Kulp D."/>
            <person name="Lai Z."/>
            <person name="Lasko P."/>
            <person name="Lei Y."/>
            <person name="Levitsky A.A."/>
            <person name="Li J.H."/>
            <person name="Li Z."/>
            <person name="Liang Y."/>
            <person name="Lin X."/>
            <person name="Liu X."/>
            <person name="Mattei B."/>
            <person name="McIntosh T.C."/>
            <person name="McLeod M.P."/>
            <person name="McPherson D."/>
            <person name="Merkulov G."/>
            <person name="Milshina N.V."/>
            <person name="Mobarry C."/>
            <person name="Morris J."/>
            <person name="Moshrefi A."/>
            <person name="Mount S.M."/>
            <person name="Moy M."/>
            <person name="Murphy B."/>
            <person name="Murphy L."/>
            <person name="Muzny D.M."/>
            <person name="Nelson D.L."/>
            <person name="Nelson D.R."/>
            <person name="Nelson K.A."/>
            <person name="Nixon K."/>
            <person name="Nusskern D.R."/>
            <person name="Pacleb J.M."/>
            <person name="Palazzolo M."/>
            <person name="Pittman G.S."/>
            <person name="Pan S."/>
            <person name="Pollard J."/>
            <person name="Puri V."/>
            <person name="Reese M.G."/>
            <person name="Reinert K."/>
            <person name="Remington K."/>
            <person name="Saunders R.D.C."/>
            <person name="Scheeler F."/>
            <person name="Shen H."/>
            <person name="Shue B.C."/>
            <person name="Siden-Kiamos I."/>
            <person name="Simpson M."/>
            <person name="Skupski M.P."/>
            <person name="Smith T.J."/>
            <person name="Spier E."/>
            <person name="Spradling A.C."/>
            <person name="Stapleton M."/>
            <person name="Strong R."/>
            <person name="Sun E."/>
            <person name="Svirskas R."/>
            <person name="Tector C."/>
            <person name="Turner R."/>
            <person name="Venter E."/>
            <person name="Wang A.H."/>
            <person name="Wang X."/>
            <person name="Wang Z.-Y."/>
            <person name="Wassarman D.A."/>
            <person name="Weinstock G.M."/>
            <person name="Weissenbach J."/>
            <person name="Williams S.M."/>
            <person name="Woodage T."/>
            <person name="Worley K.C."/>
            <person name="Wu D."/>
            <person name="Yang S."/>
            <person name="Yao Q.A."/>
            <person name="Ye J."/>
            <person name="Yeh R.-F."/>
            <person name="Zaveri J.S."/>
            <person name="Zhan M."/>
            <person name="Zhang G."/>
            <person name="Zhao Q."/>
            <person name="Zheng L."/>
            <person name="Zheng X.H."/>
            <person name="Zhong F.N."/>
            <person name="Zhong W."/>
            <person name="Zhou X."/>
            <person name="Zhu S.C."/>
            <person name="Zhu X."/>
            <person name="Smith H.O."/>
            <person name="Gibbs R.A."/>
            <person name="Myers E.W."/>
            <person name="Rubin G.M."/>
            <person name="Venter J.C."/>
        </authorList>
    </citation>
    <scope>NUCLEOTIDE SEQUENCE [LARGE SCALE GENOMIC DNA]</scope>
    <source>
        <strain>Berkeley</strain>
    </source>
</reference>
<reference key="4">
    <citation type="journal article" date="2002" name="Genome Biol.">
        <title>Annotation of the Drosophila melanogaster euchromatic genome: a systematic review.</title>
        <authorList>
            <person name="Misra S."/>
            <person name="Crosby M.A."/>
            <person name="Mungall C.J."/>
            <person name="Matthews B.B."/>
            <person name="Campbell K.S."/>
            <person name="Hradecky P."/>
            <person name="Huang Y."/>
            <person name="Kaminker J.S."/>
            <person name="Millburn G.H."/>
            <person name="Prochnik S.E."/>
            <person name="Smith C.D."/>
            <person name="Tupy J.L."/>
            <person name="Whitfield E.J."/>
            <person name="Bayraktaroglu L."/>
            <person name="Berman B.P."/>
            <person name="Bettencourt B.R."/>
            <person name="Celniker S.E."/>
            <person name="de Grey A.D.N.J."/>
            <person name="Drysdale R.A."/>
            <person name="Harris N.L."/>
            <person name="Richter J."/>
            <person name="Russo S."/>
            <person name="Schroeder A.J."/>
            <person name="Shu S.Q."/>
            <person name="Stapleton M."/>
            <person name="Yamada C."/>
            <person name="Ashburner M."/>
            <person name="Gelbart W.M."/>
            <person name="Rubin G.M."/>
            <person name="Lewis S.E."/>
        </authorList>
    </citation>
    <scope>GENOME REANNOTATION</scope>
    <scope>ALTERNATIVE SPLICING</scope>
    <source>
        <strain>Berkeley</strain>
    </source>
</reference>
<reference key="5">
    <citation type="journal article" date="2008" name="J. Proteome Res.">
        <title>Phosphoproteome analysis of Drosophila melanogaster embryos.</title>
        <authorList>
            <person name="Zhai B."/>
            <person name="Villen J."/>
            <person name="Beausoleil S.A."/>
            <person name="Mintseris J."/>
            <person name="Gygi S.P."/>
        </authorList>
    </citation>
    <scope>PHOSPHORYLATION [LARGE SCALE ANALYSIS] AT SER-2021 AND SER-2022</scope>
    <scope>IDENTIFICATION BY MASS SPECTROMETRY</scope>
    <source>
        <tissue>Embryo</tissue>
    </source>
</reference>
<reference key="6">
    <citation type="journal article" date="2008" name="Dev. Dyn.">
        <title>Leading edge-secreted Dpp cooperates with ACK-dependent signaling from the amnioserosa to regulate myosin levels during dorsal closure.</title>
        <authorList>
            <person name="Zahedi B."/>
            <person name="Shen W."/>
            <person name="Xu X."/>
            <person name="Chen X."/>
            <person name="Mahey M."/>
            <person name="Harden N."/>
        </authorList>
    </citation>
    <scope>DEVELOPMENTAL STAGE</scope>
</reference>
<reference key="7">
    <citation type="journal article" date="2013" name="PLoS ONE">
        <title>Modulation of morphogenesis by Egfr during dorsal closure in Drosophila.</title>
        <authorList>
            <person name="Shen W."/>
            <person name="Chen X."/>
            <person name="Cormier O."/>
            <person name="Cheng D.C."/>
            <person name="Reed B."/>
            <person name="Harden N."/>
        </authorList>
    </citation>
    <scope>DEVELOPMENTAL STAGE</scope>
</reference>
<reference key="8">
    <citation type="journal article" date="2014" name="PLoS Genet.">
        <title>GOLPH3 is essential for contractile ring formation and Rab11 localization to the cleavage site during cytokinesis in Drosophila melanogaster.</title>
        <authorList>
            <person name="Sechi S."/>
            <person name="Colotti G."/>
            <person name="Belloni G."/>
            <person name="Mattei V."/>
            <person name="Frappaolo A."/>
            <person name="Raffa G.D."/>
            <person name="Fuller M.T."/>
            <person name="Giansanti M.G."/>
        </authorList>
    </citation>
    <scope>FUNCTION</scope>
    <scope>INTERACTION WITH SAU</scope>
</reference>
<reference key="9">
    <citation type="journal article" date="2016" name="Elife">
        <title>The E3 ligase Ubr3 regulates Usher syndrome and MYH9 disorder proteins in the auditory organs of Drosophila and mammals.</title>
        <authorList>
            <person name="Li T."/>
            <person name="Giagtzoglou N."/>
            <person name="Eberl D.F."/>
            <person name="Jaiswal S.N."/>
            <person name="Cai T."/>
            <person name="Godt D."/>
            <person name="Groves A.K."/>
            <person name="Bellen H.J."/>
        </authorList>
    </citation>
    <scope>FUNCTION</scope>
    <scope>INTERACTION WITH CK AND UBR3</scope>
    <scope>SUBCELLULAR LOCATION</scope>
    <scope>TISSUE SPECIFICITY</scope>
    <scope>UBIQUITINATION</scope>
    <scope>MUTAGENESIS OF ASP-1932</scope>
</reference>
<reference key="10">
    <citation type="journal article" date="2019" name="Sci. Rep.">
        <title>Interplay between integrins and PI4P5K Sktl is crucial for cell polarization and reepithelialisation during Drosophila wound healing.</title>
        <authorList>
            <person name="Park S.H."/>
            <person name="Lee C.W."/>
            <person name="Choe K.M."/>
        </authorList>
    </citation>
    <scope>FUNCTION</scope>
</reference>
<reference key="11">
    <citation type="journal article" date="2021" name="Elife">
        <title>Spatiotemporal recruitment of RhoGTPase protein GRAF inhibits actomyosin ring constriction in Drosophila cellularization.</title>
        <authorList>
            <person name="Sharma S."/>
            <person name="Rikhy R."/>
        </authorList>
    </citation>
    <scope>SUBCELLULAR LOCATION</scope>
</reference>
<comment type="function">
    <text evidence="9 10 11">Nonmuscle myosin appears to be responsible for cellularization. Required for morphogenesis and cytokinesis (PubMed:24786584). Necessary for auditory transduction: plays a role in Johnston's organ organization by acting in scolopidial apical attachment (PubMed:27331610). Interaction with the myosin ck may be important for this function (PubMed:27331610). Localizes to and defines the trailing edge of cells during larval epidermal wound healing (PubMed:31704968). This process is dependent on the phosphatidylinositol 4-phosphate 5-kinase sktl/skittles (PubMed:31704968).</text>
</comment>
<comment type="subunit">
    <text evidence="9 10">Interacts with sau (PubMed:24786584). Interacts with ck and Ubr3 (PubMed:27331610).</text>
</comment>
<comment type="interaction">
    <interactant intactId="EBI-118064">
        <id>Q99323</id>
    </interactant>
    <interactant intactId="EBI-118064">
        <id>Q99323</id>
        <label>zip</label>
    </interactant>
    <organismsDiffer>false</organismsDiffer>
    <experiments>2</experiments>
</comment>
<comment type="subcellular location">
    <subcellularLocation>
        <location evidence="10">Cell projection</location>
        <location evidence="10">Cilium</location>
    </subcellularLocation>
    <subcellularLocation>
        <location evidence="12">Cytoplasm</location>
    </subcellularLocation>
    <text evidence="10 12">Expression in neurons and scolopale cells is increased at the apical tips of cilia (PubMed:27331610). During embryo cellularization, located in foci at the edges of the furrow canal tips (PubMed:33835025).</text>
</comment>
<comment type="alternative products">
    <event type="alternative splicing"/>
    <isoform>
        <id>Q99323-3</id>
        <name>3</name>
        <name>a</name>
        <sequence type="displayed"/>
    </isoform>
    <isoform>
        <id>Q99323-1</id>
        <name>1</name>
        <name>Long</name>
        <sequence type="described" ref="VSP_011159"/>
    </isoform>
    <isoform>
        <id>Q99323-2</id>
        <name>2</name>
        <name>Short</name>
        <sequence type="described" ref="VSP_003342 VSP_011159"/>
    </isoform>
    <isoform>
        <id>Q99323-4</id>
        <name>4</name>
        <name>b</name>
        <sequence type="described" ref="VSP_003342"/>
    </isoform>
</comment>
<comment type="tissue specificity">
    <text evidence="10">In Johnston's organ, expressed in neurons and scolopale cells.</text>
</comment>
<comment type="developmental stage">
    <text evidence="7 8 13">At germband retraction (stage 12), expression is high in the embryo amnioserosa and relatively low at the apical edge of the leading edge/ dorsalmost epidermal (DME) cells (PubMed:18816840, PubMed:23579691). Whereas at dorsal closure (stage 13), expression is relatively low in the amnioserosa and high in the DME cells (PubMed:18816840, PubMed:23579691). Isoforms containing exon 7 are detected in all stages of development and are expressed in embryos, early and late larvae, and adults (PubMed:8568878).</text>
</comment>
<comment type="PTM">
    <text evidence="10">Ubiquitinated.</text>
</comment>
<comment type="similarity">
    <text evidence="15">Belongs to the TRAFAC class myosin-kinesin ATPase superfamily. Myosin family.</text>
</comment>